<reference key="1">
    <citation type="journal article" date="2006" name="Mol. Microbiol.">
        <title>Role of pathogenicity island-associated integrases in the genome plasticity of uropathogenic Escherichia coli strain 536.</title>
        <authorList>
            <person name="Hochhut B."/>
            <person name="Wilde C."/>
            <person name="Balling G."/>
            <person name="Middendorf B."/>
            <person name="Dobrindt U."/>
            <person name="Brzuszkiewicz E."/>
            <person name="Gottschalk G."/>
            <person name="Carniel E."/>
            <person name="Hacker J."/>
        </authorList>
    </citation>
    <scope>NUCLEOTIDE SEQUENCE [LARGE SCALE GENOMIC DNA]</scope>
    <source>
        <strain>536 / UPEC</strain>
    </source>
</reference>
<organism>
    <name type="scientific">Escherichia coli O6:K15:H31 (strain 536 / UPEC)</name>
    <dbReference type="NCBI Taxonomy" id="362663"/>
    <lineage>
        <taxon>Bacteria</taxon>
        <taxon>Pseudomonadati</taxon>
        <taxon>Pseudomonadota</taxon>
        <taxon>Gammaproteobacteria</taxon>
        <taxon>Enterobacterales</taxon>
        <taxon>Enterobacteriaceae</taxon>
        <taxon>Escherichia</taxon>
    </lineage>
</organism>
<protein>
    <recommendedName>
        <fullName evidence="1">Cysteine desulfuration protein SufE</fullName>
    </recommendedName>
</protein>
<proteinExistence type="inferred from homology"/>
<evidence type="ECO:0000255" key="1">
    <source>
        <dbReference type="HAMAP-Rule" id="MF_01832"/>
    </source>
</evidence>
<accession>Q0THF0</accession>
<name>SUFE_ECOL5</name>
<feature type="chain" id="PRO_1000070439" description="Cysteine desulfuration protein SufE">
    <location>
        <begin position="1"/>
        <end position="138"/>
    </location>
</feature>
<feature type="active site" description="Cysteine persulfide intermediate" evidence="1">
    <location>
        <position position="51"/>
    </location>
</feature>
<dbReference type="EMBL" id="CP000247">
    <property type="protein sequence ID" value="ABG69629.1"/>
    <property type="molecule type" value="Genomic_DNA"/>
</dbReference>
<dbReference type="RefSeq" id="WP_001196524.1">
    <property type="nucleotide sequence ID" value="NC_008253.1"/>
</dbReference>
<dbReference type="SMR" id="Q0THF0"/>
<dbReference type="KEGG" id="ecp:ECP_1626"/>
<dbReference type="HOGENOM" id="CLU_124502_1_1_6"/>
<dbReference type="UniPathway" id="UPA00266"/>
<dbReference type="Proteomes" id="UP000009182">
    <property type="component" value="Chromosome"/>
</dbReference>
<dbReference type="GO" id="GO:0005737">
    <property type="term" value="C:cytoplasm"/>
    <property type="evidence" value="ECO:0007669"/>
    <property type="project" value="UniProtKB-SubCell"/>
</dbReference>
<dbReference type="GO" id="GO:0016226">
    <property type="term" value="P:iron-sulfur cluster assembly"/>
    <property type="evidence" value="ECO:0007669"/>
    <property type="project" value="InterPro"/>
</dbReference>
<dbReference type="GO" id="GO:0006790">
    <property type="term" value="P:sulfur compound metabolic process"/>
    <property type="evidence" value="ECO:0007669"/>
    <property type="project" value="InterPro"/>
</dbReference>
<dbReference type="FunFam" id="3.90.1010.10:FF:000004">
    <property type="entry name" value="Cysteine desulfuration protein SufE"/>
    <property type="match status" value="1"/>
</dbReference>
<dbReference type="Gene3D" id="3.90.1010.10">
    <property type="match status" value="1"/>
</dbReference>
<dbReference type="HAMAP" id="MF_01832">
    <property type="entry name" value="SufE"/>
    <property type="match status" value="1"/>
</dbReference>
<dbReference type="InterPro" id="IPR023939">
    <property type="entry name" value="Cysteine_desulfuration_SufE"/>
</dbReference>
<dbReference type="InterPro" id="IPR003808">
    <property type="entry name" value="Fe-S_metab-assoc_dom"/>
</dbReference>
<dbReference type="NCBIfam" id="NF006792">
    <property type="entry name" value="PRK09296.1"/>
    <property type="match status" value="1"/>
</dbReference>
<dbReference type="PANTHER" id="PTHR43597:SF3">
    <property type="entry name" value="CYSTEINE DESULFURATION PROTEIN SUFE"/>
    <property type="match status" value="1"/>
</dbReference>
<dbReference type="PANTHER" id="PTHR43597">
    <property type="entry name" value="SULFUR ACCEPTOR PROTEIN CSDE"/>
    <property type="match status" value="1"/>
</dbReference>
<dbReference type="Pfam" id="PF02657">
    <property type="entry name" value="SufE"/>
    <property type="match status" value="1"/>
</dbReference>
<dbReference type="SUPFAM" id="SSF82649">
    <property type="entry name" value="SufE/NifU"/>
    <property type="match status" value="1"/>
</dbReference>
<gene>
    <name evidence="1" type="primary">sufE</name>
    <name type="ordered locus">ECP_1626</name>
</gene>
<keyword id="KW-0963">Cytoplasm</keyword>
<sequence length="138" mass="15738">MALLPDKEKLLRNFLRCANWEEKYLYIIELGQRLPELRDEDKSPQNSIQGCQSQVWIVMRQNAQGIIELQGDSDAAIVKGLIAVVIILYDQMTPQDIVNFDVRPWFEKMALTQHLTPSRSQGLEAMIRAIRAKAAALS</sequence>
<comment type="function">
    <text evidence="1">Participates in cysteine desulfuration mediated by SufS. Cysteine desulfuration mobilizes sulfur from L-cysteine to yield L-alanine and constitutes an essential step in sulfur metabolism for biosynthesis of a variety of sulfur-containing biomolecules. Functions as a sulfur acceptor for SufS, by mediating the direct transfer of the sulfur atom from the S-sulfanylcysteine of SufS, an intermediate product of cysteine desulfuration process.</text>
</comment>
<comment type="pathway">
    <text evidence="1">Cofactor biosynthesis; iron-sulfur cluster biosynthesis.</text>
</comment>
<comment type="subunit">
    <text evidence="1">Homodimer. Interacts with SufS.</text>
</comment>
<comment type="subcellular location">
    <subcellularLocation>
        <location evidence="1">Cytoplasm</location>
    </subcellularLocation>
</comment>
<comment type="similarity">
    <text evidence="1">Belongs to the SufE family.</text>
</comment>